<dbReference type="EMBL" id="AP008981">
    <property type="protein sequence ID" value="BAG40387.1"/>
    <property type="molecule type" value="Genomic_DNA"/>
</dbReference>
<dbReference type="RefSeq" id="WP_012461514.1">
    <property type="nucleotide sequence ID" value="NC_010793.1"/>
</dbReference>
<dbReference type="SMR" id="B3CSP0"/>
<dbReference type="KEGG" id="ott:OTT_0929"/>
<dbReference type="HOGENOM" id="CLU_082184_2_2_5"/>
<dbReference type="OrthoDB" id="9801330at2"/>
<dbReference type="Proteomes" id="UP000001033">
    <property type="component" value="Chromosome"/>
</dbReference>
<dbReference type="GO" id="GO:0022625">
    <property type="term" value="C:cytosolic large ribosomal subunit"/>
    <property type="evidence" value="ECO:0007669"/>
    <property type="project" value="TreeGrafter"/>
</dbReference>
<dbReference type="GO" id="GO:0003729">
    <property type="term" value="F:mRNA binding"/>
    <property type="evidence" value="ECO:0007669"/>
    <property type="project" value="TreeGrafter"/>
</dbReference>
<dbReference type="GO" id="GO:0003735">
    <property type="term" value="F:structural constituent of ribosome"/>
    <property type="evidence" value="ECO:0007669"/>
    <property type="project" value="InterPro"/>
</dbReference>
<dbReference type="GO" id="GO:0017148">
    <property type="term" value="P:negative regulation of translation"/>
    <property type="evidence" value="ECO:0007669"/>
    <property type="project" value="TreeGrafter"/>
</dbReference>
<dbReference type="GO" id="GO:0006412">
    <property type="term" value="P:translation"/>
    <property type="evidence" value="ECO:0007669"/>
    <property type="project" value="UniProtKB-UniRule"/>
</dbReference>
<dbReference type="CDD" id="cd00392">
    <property type="entry name" value="Ribosomal_L13"/>
    <property type="match status" value="1"/>
</dbReference>
<dbReference type="Gene3D" id="3.90.1180.10">
    <property type="entry name" value="Ribosomal protein L13"/>
    <property type="match status" value="1"/>
</dbReference>
<dbReference type="HAMAP" id="MF_01366">
    <property type="entry name" value="Ribosomal_uL13"/>
    <property type="match status" value="1"/>
</dbReference>
<dbReference type="InterPro" id="IPR005822">
    <property type="entry name" value="Ribosomal_uL13"/>
</dbReference>
<dbReference type="InterPro" id="IPR005823">
    <property type="entry name" value="Ribosomal_uL13_bac-type"/>
</dbReference>
<dbReference type="InterPro" id="IPR023563">
    <property type="entry name" value="Ribosomal_uL13_CS"/>
</dbReference>
<dbReference type="InterPro" id="IPR036899">
    <property type="entry name" value="Ribosomal_uL13_sf"/>
</dbReference>
<dbReference type="NCBIfam" id="TIGR01066">
    <property type="entry name" value="rplM_bact"/>
    <property type="match status" value="1"/>
</dbReference>
<dbReference type="PANTHER" id="PTHR11545:SF2">
    <property type="entry name" value="LARGE RIBOSOMAL SUBUNIT PROTEIN UL13M"/>
    <property type="match status" value="1"/>
</dbReference>
<dbReference type="PANTHER" id="PTHR11545">
    <property type="entry name" value="RIBOSOMAL PROTEIN L13"/>
    <property type="match status" value="1"/>
</dbReference>
<dbReference type="Pfam" id="PF00572">
    <property type="entry name" value="Ribosomal_L13"/>
    <property type="match status" value="1"/>
</dbReference>
<dbReference type="PIRSF" id="PIRSF002181">
    <property type="entry name" value="Ribosomal_L13"/>
    <property type="match status" value="1"/>
</dbReference>
<dbReference type="SUPFAM" id="SSF52161">
    <property type="entry name" value="Ribosomal protein L13"/>
    <property type="match status" value="1"/>
</dbReference>
<dbReference type="PROSITE" id="PS00783">
    <property type="entry name" value="RIBOSOMAL_L13"/>
    <property type="match status" value="1"/>
</dbReference>
<accession>B3CSP0</accession>
<sequence>MKTYSAKPAEISKKWILIDATNLVLGRLAAKVAVVLRGKDKPTYTPHMDCGNNVIIINAEQVKLTGDKSNAKNGKFYYRHSGFPGGIKVTTAGKILQSNYPERIIQLAVKRMLPSNKLGRKQFSNLYVYKGQTHPHAAQTPVLYDFAGKNSKNIRNQNIV</sequence>
<gene>
    <name evidence="1" type="primary">rplM</name>
    <name type="ordered locus">OTT_0929</name>
</gene>
<feature type="chain" id="PRO_1000144161" description="Large ribosomal subunit protein uL13">
    <location>
        <begin position="1"/>
        <end position="160"/>
    </location>
</feature>
<keyword id="KW-0687">Ribonucleoprotein</keyword>
<keyword id="KW-0689">Ribosomal protein</keyword>
<reference key="1">
    <citation type="journal article" date="2008" name="DNA Res.">
        <title>The whole-genome sequencing of the obligate intracellular bacterium Orientia tsutsugamushi revealed massive gene amplification during reductive genome evolution.</title>
        <authorList>
            <person name="Nakayama K."/>
            <person name="Yamashita A."/>
            <person name="Kurokawa K."/>
            <person name="Morimoto T."/>
            <person name="Ogawa M."/>
            <person name="Fukuhara M."/>
            <person name="Urakami H."/>
            <person name="Ohnishi M."/>
            <person name="Uchiyama I."/>
            <person name="Ogura Y."/>
            <person name="Ooka T."/>
            <person name="Oshima K."/>
            <person name="Tamura A."/>
            <person name="Hattori M."/>
            <person name="Hayashi T."/>
        </authorList>
    </citation>
    <scope>NUCLEOTIDE SEQUENCE [LARGE SCALE GENOMIC DNA]</scope>
    <source>
        <strain>Ikeda</strain>
    </source>
</reference>
<protein>
    <recommendedName>
        <fullName evidence="1">Large ribosomal subunit protein uL13</fullName>
    </recommendedName>
    <alternativeName>
        <fullName evidence="2">50S ribosomal protein L13</fullName>
    </alternativeName>
</protein>
<evidence type="ECO:0000255" key="1">
    <source>
        <dbReference type="HAMAP-Rule" id="MF_01366"/>
    </source>
</evidence>
<evidence type="ECO:0000305" key="2"/>
<name>RL13_ORITI</name>
<comment type="function">
    <text evidence="1">This protein is one of the early assembly proteins of the 50S ribosomal subunit, although it is not seen to bind rRNA by itself. It is important during the early stages of 50S assembly.</text>
</comment>
<comment type="subunit">
    <text evidence="1">Part of the 50S ribosomal subunit.</text>
</comment>
<comment type="similarity">
    <text evidence="1">Belongs to the universal ribosomal protein uL13 family.</text>
</comment>
<organism>
    <name type="scientific">Orientia tsutsugamushi (strain Ikeda)</name>
    <name type="common">Rickettsia tsutsugamushi</name>
    <dbReference type="NCBI Taxonomy" id="334380"/>
    <lineage>
        <taxon>Bacteria</taxon>
        <taxon>Pseudomonadati</taxon>
        <taxon>Pseudomonadota</taxon>
        <taxon>Alphaproteobacteria</taxon>
        <taxon>Rickettsiales</taxon>
        <taxon>Rickettsiaceae</taxon>
        <taxon>Rickettsieae</taxon>
        <taxon>Orientia</taxon>
    </lineage>
</organism>
<proteinExistence type="inferred from homology"/>